<comment type="function">
    <text evidence="1">Plays a role in viral cell-to-cell propagation, by facilitating genome transport to neighboring plant cells through plasmosdesmata,.</text>
</comment>
<comment type="subcellular location">
    <subcellularLocation>
        <location evidence="1">Host endoplasmic reticulum membrane</location>
    </subcellularLocation>
</comment>
<comment type="miscellaneous">
    <text>TGBp1, TGBp2 and TGBp3 seem to act together for cell-to-cell propagation. TGBp1 is the main movement protein that physically cross the plasmodesma with the viral genome. TGBp2 and TGBp3 would facilitate TGBp1 function.</text>
</comment>
<comment type="similarity">
    <text evidence="3">Belongs to the Tymovirales TGBp2 protein family.</text>
</comment>
<feature type="chain" id="PRO_0000222586" description="Movement protein TGB2">
    <location>
        <begin position="1"/>
        <end position="110"/>
    </location>
</feature>
<feature type="topological domain" description="Cytoplasmic" evidence="1">
    <location>
        <begin position="1"/>
        <end position="10"/>
    </location>
</feature>
<feature type="transmembrane region" description="Helical" evidence="2">
    <location>
        <begin position="11"/>
        <end position="34"/>
    </location>
</feature>
<feature type="topological domain" description="Lumenal" evidence="1">
    <location>
        <begin position="35"/>
        <end position="76"/>
    </location>
</feature>
<feature type="transmembrane region" description="Helical" evidence="2">
    <location>
        <begin position="77"/>
        <end position="92"/>
    </location>
</feature>
<feature type="topological domain" description="Cytoplasmic" evidence="1">
    <location>
        <begin position="93"/>
        <end position="110"/>
    </location>
</feature>
<reference key="1">
    <citation type="journal article" date="1994" name="J. Gen. Virol.">
        <title>Genome characterization and taxonomy of Plantago asiatica mosaic potexvirus.</title>
        <authorList>
            <person name="Solovyev A.G."/>
            <person name="Novikov V.K."/>
            <person name="Merits A."/>
            <person name="Savenkov E.I."/>
            <person name="Zelenina D.A."/>
            <person name="Tyulkina L.G."/>
            <person name="Morozov S.Y."/>
        </authorList>
    </citation>
    <scope>NUCLEOTIDE SEQUENCE [GENOMIC RNA]</scope>
</reference>
<reference key="2">
    <citation type="journal article" date="1993" name="Dokl. Akad. Nauk">
        <title>Primary structure of the triple block RNA genes of the Plantago asiatica mosaic virus.</title>
        <authorList>
            <person name="Solovyev A.G."/>
            <person name="Novikov V.K."/>
            <person name="Morozov S.I."/>
            <person name="Kagramanov V.N."/>
            <person name="Atabekov I.G."/>
        </authorList>
    </citation>
    <scope>NUCLEOTIDE SEQUENCE [GENOMIC RNA]</scope>
</reference>
<reference key="3">
    <citation type="journal article" date="2005" name="Mol. Plant Microbe Interact.">
        <title>A new cell-to-cell transport model for Potexviruses.</title>
        <authorList>
            <person name="Verchot-Lubicz J."/>
        </authorList>
    </citation>
    <scope>REVIEW</scope>
</reference>
<gene>
    <name type="ORF">ORF3</name>
</gene>
<sequence length="110" mass="11690">MSGAHHLTPPTDYGKPVLAASIGISLALLVYTATRSTLPHVGDNLHALPHGGRYVDGTKSISYFSPSASKTRDPFPFAFLLILTLSGLILLLSRRRSNPHSCPSCGTPHA</sequence>
<organismHost>
    <name type="scientific">Plantago asiatica</name>
    <dbReference type="NCBI Taxonomy" id="197796"/>
</organismHost>
<name>TGB2_P1AMV</name>
<protein>
    <recommendedName>
        <fullName>Movement protein TGB2</fullName>
    </recommendedName>
    <alternativeName>
        <fullName>12 kDa protein</fullName>
    </alternativeName>
    <alternativeName>
        <fullName>Triple gene block 2 protein</fullName>
        <shortName>TGBp2</shortName>
    </alternativeName>
</protein>
<keyword id="KW-1038">Host endoplasmic reticulum</keyword>
<keyword id="KW-1043">Host membrane</keyword>
<keyword id="KW-0472">Membrane</keyword>
<keyword id="KW-1185">Reference proteome</keyword>
<keyword id="KW-0812">Transmembrane</keyword>
<keyword id="KW-1133">Transmembrane helix</keyword>
<keyword id="KW-0813">Transport</keyword>
<keyword id="KW-0916">Viral movement protein</keyword>
<organism>
    <name type="scientific">Plantago asiatica mosaic potexvirus</name>
    <name type="common">P1AMV</name>
    <dbReference type="NCBI Taxonomy" id="28354"/>
    <lineage>
        <taxon>Viruses</taxon>
        <taxon>Riboviria</taxon>
        <taxon>Orthornavirae</taxon>
        <taxon>Kitrinoviricota</taxon>
        <taxon>Alsuviricetes</taxon>
        <taxon>Tymovirales</taxon>
        <taxon>Alphaflexiviridae</taxon>
        <taxon>Potexvirus</taxon>
    </lineage>
</organism>
<accession>Q07519</accession>
<proteinExistence type="inferred from homology"/>
<dbReference type="EMBL" id="Z21647">
    <property type="protein sequence ID" value="CAA79763.1"/>
    <property type="molecule type" value="Genomic_RNA"/>
</dbReference>
<dbReference type="EMBL" id="S61526">
    <property type="protein sequence ID" value="AAB26349.1"/>
    <property type="molecule type" value="Genomic_RNA"/>
</dbReference>
<dbReference type="PIR" id="S34232">
    <property type="entry name" value="S34232"/>
</dbReference>
<dbReference type="RefSeq" id="NP_620838.1">
    <property type="nucleotide sequence ID" value="NC_003849.1"/>
</dbReference>
<dbReference type="KEGG" id="vg:944435"/>
<dbReference type="OrthoDB" id="20634at10239"/>
<dbReference type="Proteomes" id="UP000009190">
    <property type="component" value="Genome"/>
</dbReference>
<dbReference type="GO" id="GO:0044167">
    <property type="term" value="C:host cell endoplasmic reticulum membrane"/>
    <property type="evidence" value="ECO:0007669"/>
    <property type="project" value="UniProtKB-SubCell"/>
</dbReference>
<dbReference type="GO" id="GO:0016020">
    <property type="term" value="C:membrane"/>
    <property type="evidence" value="ECO:0007669"/>
    <property type="project" value="UniProtKB-KW"/>
</dbReference>
<dbReference type="GO" id="GO:0046740">
    <property type="term" value="P:transport of virus in host, cell to cell"/>
    <property type="evidence" value="ECO:0007669"/>
    <property type="project" value="UniProtKB-KW"/>
</dbReference>
<dbReference type="InterPro" id="IPR001896">
    <property type="entry name" value="Plant_vir_prot"/>
</dbReference>
<dbReference type="Pfam" id="PF01307">
    <property type="entry name" value="Plant_vir_prot"/>
    <property type="match status" value="1"/>
</dbReference>
<evidence type="ECO:0000250" key="1"/>
<evidence type="ECO:0000255" key="2"/>
<evidence type="ECO:0000305" key="3"/>